<organism>
    <name type="scientific">Plasmodium chabaudi</name>
    <dbReference type="NCBI Taxonomy" id="5825"/>
    <lineage>
        <taxon>Eukaryota</taxon>
        <taxon>Sar</taxon>
        <taxon>Alveolata</taxon>
        <taxon>Apicomplexa</taxon>
        <taxon>Aconoidasida</taxon>
        <taxon>Haemosporida</taxon>
        <taxon>Plasmodiidae</taxon>
        <taxon>Plasmodium</taxon>
        <taxon>Plasmodium (Vinckeia)</taxon>
    </lineage>
</organism>
<sequence length="583" mass="68051">MEDISEIFDIYAICACCKVLNSNEKAGCFSNKTFKGLGNEGGLPWKCNSVDMKHFSSVTSYVNETNYMRLKWKRDRYMEKNNVKLNTDGIPSVDKLQNIVVMGKASWESIPSKFKPLQNRINIILSRTLKKEDLAKEYNNVIIINSVDDLFPILKCIKYYKCFIIGGASVYKEFLDRNLIKKIYFTRINNAYTCDVLFPDINEDLFKITSISDVYSSNNTTLDFVIYSKTKEIHEEINPNDELFNNTFLGVCDEKNTNFDDEDDYTYFSFNKHKDNIKKNSEHAHHFKIYNSIKYKHHPEYQYLNIIYDIIMHGNKQDDRTGVGVLSKFGYMMKFNLSEYFPLLTTKKLFVRGIIEELLWFIRGETNGNTLLEKNVRIWEANGTREFLDNRKLFHREVNDLGPIYGFQWRHFGAEYTDMHADYKDKGVDQLKNIINLIKNDPTCRRIILCAWNVKDLDQMALPPCHILCQFYVFDGKLSCIMYQRSCDLGLGVPFNIASYSIFTYMIAQVCNLQPAEFIHVLGNAHVYNNHVESLKVQLNRTPYPFPTLKLNPEIKNIEDFTISDFTVQNYVHHDKISMDMAA</sequence>
<protein>
    <recommendedName>
        <fullName>Bifunctional dihydrofolate reductase-thymidylate synthase</fullName>
        <shortName>DHFR-TS</shortName>
    </recommendedName>
    <domain>
        <recommendedName>
            <fullName>Dihydrofolate reductase</fullName>
            <ecNumber>1.5.1.3</ecNumber>
        </recommendedName>
    </domain>
    <domain>
        <recommendedName>
            <fullName>Thymidylate synthase</fullName>
            <ecNumber>2.1.1.45</ecNumber>
        </recommendedName>
    </domain>
</protein>
<proteinExistence type="inferred from homology"/>
<keyword id="KW-0489">Methyltransferase</keyword>
<keyword id="KW-0511">Multifunctional enzyme</keyword>
<keyword id="KW-0521">NADP</keyword>
<keyword id="KW-0545">Nucleotide biosynthesis</keyword>
<keyword id="KW-0554">One-carbon metabolism</keyword>
<keyword id="KW-0560">Oxidoreductase</keyword>
<keyword id="KW-0808">Transferase</keyword>
<accession>P20712</accession>
<accession>Q27715</accession>
<feature type="chain" id="PRO_0000186348" description="Bifunctional dihydrofolate reductase-thymidylate synthase">
    <location>
        <begin position="1"/>
        <end position="583"/>
    </location>
</feature>
<feature type="domain" description="DHFR">
    <location>
        <begin position="9"/>
        <end position="229"/>
    </location>
</feature>
<feature type="region of interest" description="Thymidylate synthase">
    <location>
        <begin position="298"/>
        <end position="583"/>
    </location>
</feature>
<feature type="active site" evidence="1">
    <location>
        <position position="465"/>
    </location>
</feature>
<feature type="binding site" evidence="1">
    <location>
        <begin position="36"/>
        <end position="42"/>
    </location>
    <ligand>
        <name>NADP(+)</name>
        <dbReference type="ChEBI" id="CHEBI:58349"/>
    </ligand>
</feature>
<feature type="binding site" evidence="1">
    <location>
        <position position="51"/>
    </location>
    <ligand>
        <name>substrate</name>
    </ligand>
</feature>
<feature type="binding site" evidence="1">
    <location>
        <begin position="104"/>
        <end position="106"/>
    </location>
    <ligand>
        <name>NADP(+)</name>
        <dbReference type="ChEBI" id="CHEBI:58349"/>
    </ligand>
</feature>
<feature type="binding site" evidence="1">
    <location>
        <begin position="125"/>
        <end position="128"/>
    </location>
    <ligand>
        <name>NADP(+)</name>
        <dbReference type="ChEBI" id="CHEBI:58349"/>
    </ligand>
</feature>
<feature type="binding site" evidence="1">
    <location>
        <position position="165"/>
    </location>
    <ligand>
        <name>substrate</name>
    </ligand>
</feature>
<feature type="binding site" evidence="1">
    <location>
        <begin position="166"/>
        <end position="173"/>
    </location>
    <ligand>
        <name>NADP(+)</name>
        <dbReference type="ChEBI" id="CHEBI:58349"/>
    </ligand>
</feature>
<feature type="binding site" evidence="1">
    <location>
        <position position="171"/>
    </location>
    <ligand>
        <name>substrate</name>
    </ligand>
</feature>
<feature type="binding site" evidence="1">
    <location>
        <position position="186"/>
    </location>
    <ligand>
        <name>substrate</name>
    </ligand>
</feature>
<feature type="binding site" evidence="1">
    <location>
        <position position="320"/>
    </location>
    <ligand>
        <name>dUMP</name>
        <dbReference type="ChEBI" id="CHEBI:246422"/>
    </ligand>
</feature>
<feature type="binding site" evidence="1">
    <location>
        <position position="466"/>
    </location>
    <ligand>
        <name>dUMP</name>
        <dbReference type="ChEBI" id="CHEBI:246422"/>
    </ligand>
</feature>
<feature type="binding site" evidence="1">
    <location>
        <begin position="484"/>
        <end position="488"/>
    </location>
    <ligand>
        <name>dUMP</name>
        <dbReference type="ChEBI" id="CHEBI:246422"/>
    </ligand>
</feature>
<feature type="binding site" evidence="1">
    <location>
        <position position="496"/>
    </location>
    <ligand>
        <name>dUMP</name>
        <dbReference type="ChEBI" id="CHEBI:246422"/>
    </ligand>
</feature>
<feature type="binding site" evidence="1">
    <location>
        <begin position="526"/>
        <end position="528"/>
    </location>
    <ligand>
        <name>dUMP</name>
        <dbReference type="ChEBI" id="CHEBI:246422"/>
    </ligand>
</feature>
<feature type="sequence variant" description="In pyrimethamine resistance.">
    <original>S</original>
    <variation>I</variation>
    <location>
        <position position="106"/>
    </location>
</feature>
<feature type="sequence conflict" description="In Ref. 2; AAB59201." evidence="2" ref="2">
    <original>G</original>
    <variation>S</variation>
    <location>
        <position position="27"/>
    </location>
</feature>
<feature type="sequence conflict" description="In Ref. 2; AAB59201." evidence="2" ref="2">
    <original>C</original>
    <variation>S</variation>
    <location>
        <position position="156"/>
    </location>
</feature>
<feature type="sequence conflict" description="In Ref. 2; AAB59201." evidence="2" ref="2">
    <original>I</original>
    <variation>V</variation>
    <location>
        <position position="164"/>
    </location>
</feature>
<evidence type="ECO:0000250" key="1"/>
<evidence type="ECO:0000305" key="2"/>
<dbReference type="EC" id="1.5.1.3"/>
<dbReference type="EC" id="2.1.1.45"/>
<dbReference type="EMBL" id="M30834">
    <property type="protein sequence ID" value="AAA29587.1"/>
    <property type="molecule type" value="Genomic_DNA"/>
</dbReference>
<dbReference type="EMBL" id="L28120">
    <property type="protein sequence ID" value="AAB59201.1"/>
    <property type="molecule type" value="Genomic_DNA"/>
</dbReference>
<dbReference type="PIR" id="A33484">
    <property type="entry name" value="RDZQTB"/>
</dbReference>
<dbReference type="SMR" id="P20712"/>
<dbReference type="VEuPathDB" id="PlasmoDB:PCHAS_0728300"/>
<dbReference type="eggNOG" id="KOG0673">
    <property type="taxonomic scope" value="Eukaryota"/>
</dbReference>
<dbReference type="eggNOG" id="KOG1324">
    <property type="taxonomic scope" value="Eukaryota"/>
</dbReference>
<dbReference type="UniPathway" id="UPA00077">
    <property type="reaction ID" value="UER00158"/>
</dbReference>
<dbReference type="GO" id="GO:0005829">
    <property type="term" value="C:cytosol"/>
    <property type="evidence" value="ECO:0007669"/>
    <property type="project" value="TreeGrafter"/>
</dbReference>
<dbReference type="GO" id="GO:0005739">
    <property type="term" value="C:mitochondrion"/>
    <property type="evidence" value="ECO:0007669"/>
    <property type="project" value="TreeGrafter"/>
</dbReference>
<dbReference type="GO" id="GO:0004146">
    <property type="term" value="F:dihydrofolate reductase activity"/>
    <property type="evidence" value="ECO:0007669"/>
    <property type="project" value="UniProtKB-EC"/>
</dbReference>
<dbReference type="GO" id="GO:0004799">
    <property type="term" value="F:thymidylate synthase activity"/>
    <property type="evidence" value="ECO:0007669"/>
    <property type="project" value="UniProtKB-EC"/>
</dbReference>
<dbReference type="GO" id="GO:0006231">
    <property type="term" value="P:dTMP biosynthetic process"/>
    <property type="evidence" value="ECO:0007669"/>
    <property type="project" value="InterPro"/>
</dbReference>
<dbReference type="GO" id="GO:0032259">
    <property type="term" value="P:methylation"/>
    <property type="evidence" value="ECO:0007669"/>
    <property type="project" value="UniProtKB-KW"/>
</dbReference>
<dbReference type="GO" id="GO:0006730">
    <property type="term" value="P:one-carbon metabolic process"/>
    <property type="evidence" value="ECO:0007669"/>
    <property type="project" value="UniProtKB-KW"/>
</dbReference>
<dbReference type="GO" id="GO:0046654">
    <property type="term" value="P:tetrahydrofolate biosynthetic process"/>
    <property type="evidence" value="ECO:0007669"/>
    <property type="project" value="UniProtKB-UniPathway"/>
</dbReference>
<dbReference type="CDD" id="cd00209">
    <property type="entry name" value="DHFR"/>
    <property type="match status" value="1"/>
</dbReference>
<dbReference type="CDD" id="cd00351">
    <property type="entry name" value="TS_Pyrimidine_HMase"/>
    <property type="match status" value="1"/>
</dbReference>
<dbReference type="FunFam" id="3.40.430.10:FF:000007">
    <property type="entry name" value="Bifunctional dihydrofolate reductase-thymidylate synthase"/>
    <property type="match status" value="1"/>
</dbReference>
<dbReference type="FunFam" id="3.30.572.10:FF:000002">
    <property type="entry name" value="Possible thymidylate synthase"/>
    <property type="match status" value="1"/>
</dbReference>
<dbReference type="Gene3D" id="6.10.250.2210">
    <property type="match status" value="1"/>
</dbReference>
<dbReference type="Gene3D" id="3.40.430.10">
    <property type="entry name" value="Dihydrofolate Reductase, subunit A"/>
    <property type="match status" value="1"/>
</dbReference>
<dbReference type="Gene3D" id="3.30.572.10">
    <property type="entry name" value="Thymidylate synthase/dCMP hydroxymethylase domain"/>
    <property type="match status" value="1"/>
</dbReference>
<dbReference type="HAMAP" id="MF_00008">
    <property type="entry name" value="Thymidy_synth_bact"/>
    <property type="match status" value="1"/>
</dbReference>
<dbReference type="InterPro" id="IPR024072">
    <property type="entry name" value="DHFR-like_dom_sf"/>
</dbReference>
<dbReference type="InterPro" id="IPR012262">
    <property type="entry name" value="DHFR-TS"/>
</dbReference>
<dbReference type="InterPro" id="IPR017925">
    <property type="entry name" value="DHFR_CS"/>
</dbReference>
<dbReference type="InterPro" id="IPR001796">
    <property type="entry name" value="DHFR_dom"/>
</dbReference>
<dbReference type="InterPro" id="IPR045097">
    <property type="entry name" value="Thymidate_synth/dCMP_Mease"/>
</dbReference>
<dbReference type="InterPro" id="IPR023451">
    <property type="entry name" value="Thymidate_synth/dCMP_Mease_dom"/>
</dbReference>
<dbReference type="InterPro" id="IPR036926">
    <property type="entry name" value="Thymidate_synth/dCMP_Mease_sf"/>
</dbReference>
<dbReference type="InterPro" id="IPR000398">
    <property type="entry name" value="Thymidylate_synthase"/>
</dbReference>
<dbReference type="InterPro" id="IPR020940">
    <property type="entry name" value="Thymidylate_synthase_AS"/>
</dbReference>
<dbReference type="NCBIfam" id="NF002497">
    <property type="entry name" value="PRK01827.1-3"/>
    <property type="match status" value="1"/>
</dbReference>
<dbReference type="NCBIfam" id="TIGR03284">
    <property type="entry name" value="thym_sym"/>
    <property type="match status" value="1"/>
</dbReference>
<dbReference type="PANTHER" id="PTHR11548:SF2">
    <property type="entry name" value="THYMIDYLATE SYNTHASE"/>
    <property type="match status" value="1"/>
</dbReference>
<dbReference type="PANTHER" id="PTHR11548">
    <property type="entry name" value="THYMIDYLATE SYNTHASE 1"/>
    <property type="match status" value="1"/>
</dbReference>
<dbReference type="Pfam" id="PF00186">
    <property type="entry name" value="DHFR_1"/>
    <property type="match status" value="1"/>
</dbReference>
<dbReference type="Pfam" id="PF00303">
    <property type="entry name" value="Thymidylat_synt"/>
    <property type="match status" value="1"/>
</dbReference>
<dbReference type="PIRSF" id="PIRSF000389">
    <property type="entry name" value="DHFR-TS"/>
    <property type="match status" value="1"/>
</dbReference>
<dbReference type="PRINTS" id="PR00108">
    <property type="entry name" value="THYMDSNTHASE"/>
</dbReference>
<dbReference type="SUPFAM" id="SSF53597">
    <property type="entry name" value="Dihydrofolate reductase-like"/>
    <property type="match status" value="1"/>
</dbReference>
<dbReference type="SUPFAM" id="SSF55831">
    <property type="entry name" value="Thymidylate synthase/dCMP hydroxymethylase"/>
    <property type="match status" value="1"/>
</dbReference>
<dbReference type="PROSITE" id="PS00075">
    <property type="entry name" value="DHFR_1"/>
    <property type="match status" value="1"/>
</dbReference>
<dbReference type="PROSITE" id="PS51330">
    <property type="entry name" value="DHFR_2"/>
    <property type="match status" value="1"/>
</dbReference>
<dbReference type="PROSITE" id="PS00091">
    <property type="entry name" value="THYMIDYLATE_SYNTHASE"/>
    <property type="match status" value="1"/>
</dbReference>
<comment type="function">
    <text evidence="1">Bifunctional enzyme. Involved in de novo dTMP biosynthesis. Key enzyme in folate metabolism. Catalyzes an essential reaction for de novo glycine and purine synthesis, DNA precursor synthesis, and for the conversion of dUMP to dTMP (By similarity).</text>
</comment>
<comment type="catalytic activity">
    <reaction>
        <text>(6S)-5,6,7,8-tetrahydrofolate + NADP(+) = 7,8-dihydrofolate + NADPH + H(+)</text>
        <dbReference type="Rhea" id="RHEA:15009"/>
        <dbReference type="ChEBI" id="CHEBI:15378"/>
        <dbReference type="ChEBI" id="CHEBI:57451"/>
        <dbReference type="ChEBI" id="CHEBI:57453"/>
        <dbReference type="ChEBI" id="CHEBI:57783"/>
        <dbReference type="ChEBI" id="CHEBI:58349"/>
        <dbReference type="EC" id="1.5.1.3"/>
    </reaction>
</comment>
<comment type="catalytic activity">
    <reaction>
        <text>dUMP + (6R)-5,10-methylene-5,6,7,8-tetrahydrofolate = 7,8-dihydrofolate + dTMP</text>
        <dbReference type="Rhea" id="RHEA:12104"/>
        <dbReference type="ChEBI" id="CHEBI:15636"/>
        <dbReference type="ChEBI" id="CHEBI:57451"/>
        <dbReference type="ChEBI" id="CHEBI:63528"/>
        <dbReference type="ChEBI" id="CHEBI:246422"/>
        <dbReference type="EC" id="2.1.1.45"/>
    </reaction>
</comment>
<comment type="pathway">
    <text>Cofactor biosynthesis; tetrahydrofolate biosynthesis; 5,6,7,8-tetrahydrofolate from 7,8-dihydrofolate: step 1/1.</text>
</comment>
<comment type="subunit">
    <text evidence="1">Homodimer.</text>
</comment>
<comment type="similarity">
    <text evidence="2">In the N-terminal section; belongs to the dihydrofolate reductase family.</text>
</comment>
<comment type="similarity">
    <text evidence="2">In the C-terminal section; belongs to the thymidylate synthase family.</text>
</comment>
<name>DRTS_PLACH</name>
<reference key="1">
    <citation type="journal article" date="1989" name="Mol. Cell. Biol.">
        <title>Antifolate drug selection results in duplication and rearrangement of chromosome 7 in Plasmodium chabaudi.</title>
        <authorList>
            <person name="Cowman A.F."/>
            <person name="Lew A.M."/>
        </authorList>
    </citation>
    <scope>NUCLEOTIDE SEQUENCE [GENOMIC DNA]</scope>
</reference>
<reference key="2">
    <citation type="journal article" date="1994" name="Mol. Biochem. Parasitol.">
        <title>The dihydrofolate reductase domain of rodent malarias: point mutations and pyrimethamine resistance.</title>
        <authorList>
            <person name="Cheng Q."/>
            <person name="Saul A."/>
        </authorList>
    </citation>
    <scope>NUCLEOTIDE SEQUENCE [GENOMIC DNA] OF 12-193</scope>
</reference>